<evidence type="ECO:0000255" key="1">
    <source>
        <dbReference type="HAMAP-Rule" id="MF_00003"/>
    </source>
</evidence>
<dbReference type="EMBL" id="AM295250">
    <property type="protein sequence ID" value="CAL27819.1"/>
    <property type="molecule type" value="Genomic_DNA"/>
</dbReference>
<dbReference type="RefSeq" id="WP_015900160.1">
    <property type="nucleotide sequence ID" value="NC_012121.1"/>
</dbReference>
<dbReference type="SMR" id="B9DPD6"/>
<dbReference type="GeneID" id="93793339"/>
<dbReference type="KEGG" id="sca:SCA_0910"/>
<dbReference type="eggNOG" id="COG0858">
    <property type="taxonomic scope" value="Bacteria"/>
</dbReference>
<dbReference type="HOGENOM" id="CLU_089475_6_3_9"/>
<dbReference type="OrthoDB" id="307788at2"/>
<dbReference type="BioCyc" id="SCAR396513:SCA_RS04585-MONOMER"/>
<dbReference type="Proteomes" id="UP000000444">
    <property type="component" value="Chromosome"/>
</dbReference>
<dbReference type="GO" id="GO:0005829">
    <property type="term" value="C:cytosol"/>
    <property type="evidence" value="ECO:0007669"/>
    <property type="project" value="TreeGrafter"/>
</dbReference>
<dbReference type="GO" id="GO:0043024">
    <property type="term" value="F:ribosomal small subunit binding"/>
    <property type="evidence" value="ECO:0007669"/>
    <property type="project" value="TreeGrafter"/>
</dbReference>
<dbReference type="GO" id="GO:0030490">
    <property type="term" value="P:maturation of SSU-rRNA"/>
    <property type="evidence" value="ECO:0007669"/>
    <property type="project" value="UniProtKB-UniRule"/>
</dbReference>
<dbReference type="FunFam" id="3.30.300.20:FF:000009">
    <property type="entry name" value="Ribosome-binding factor A"/>
    <property type="match status" value="1"/>
</dbReference>
<dbReference type="Gene3D" id="3.30.300.20">
    <property type="match status" value="1"/>
</dbReference>
<dbReference type="HAMAP" id="MF_00003">
    <property type="entry name" value="RbfA"/>
    <property type="match status" value="1"/>
</dbReference>
<dbReference type="InterPro" id="IPR015946">
    <property type="entry name" value="KH_dom-like_a/b"/>
</dbReference>
<dbReference type="InterPro" id="IPR000238">
    <property type="entry name" value="RbfA"/>
</dbReference>
<dbReference type="InterPro" id="IPR023799">
    <property type="entry name" value="RbfA_dom_sf"/>
</dbReference>
<dbReference type="InterPro" id="IPR020053">
    <property type="entry name" value="Ribosome-bd_factorA_CS"/>
</dbReference>
<dbReference type="NCBIfam" id="TIGR00082">
    <property type="entry name" value="rbfA"/>
    <property type="match status" value="1"/>
</dbReference>
<dbReference type="PANTHER" id="PTHR33515">
    <property type="entry name" value="RIBOSOME-BINDING FACTOR A, CHLOROPLASTIC-RELATED"/>
    <property type="match status" value="1"/>
</dbReference>
<dbReference type="PANTHER" id="PTHR33515:SF1">
    <property type="entry name" value="RIBOSOME-BINDING FACTOR A, CHLOROPLASTIC-RELATED"/>
    <property type="match status" value="1"/>
</dbReference>
<dbReference type="Pfam" id="PF02033">
    <property type="entry name" value="RBFA"/>
    <property type="match status" value="1"/>
</dbReference>
<dbReference type="SUPFAM" id="SSF89919">
    <property type="entry name" value="Ribosome-binding factor A, RbfA"/>
    <property type="match status" value="1"/>
</dbReference>
<dbReference type="PROSITE" id="PS01319">
    <property type="entry name" value="RBFA"/>
    <property type="match status" value="1"/>
</dbReference>
<gene>
    <name evidence="1" type="primary">rbfA</name>
    <name type="ordered locus">Sca_0910</name>
</gene>
<sequence length="115" mass="13375">MSKMRAERVGEQMKKELMDIINNKVKDPRIGFITITDVQVTNDLSLAKVYLTVLGNEKEVDDTFKALEKAKGFIKSELGSRMRLRIVPELQFEYDHSIEYGNKIEKMIQDLHKKD</sequence>
<keyword id="KW-0963">Cytoplasm</keyword>
<keyword id="KW-1185">Reference proteome</keyword>
<keyword id="KW-0690">Ribosome biogenesis</keyword>
<protein>
    <recommendedName>
        <fullName evidence="1">Ribosome-binding factor A</fullName>
    </recommendedName>
</protein>
<feature type="chain" id="PRO_1000116214" description="Ribosome-binding factor A">
    <location>
        <begin position="1"/>
        <end position="115"/>
    </location>
</feature>
<accession>B9DPD6</accession>
<proteinExistence type="inferred from homology"/>
<name>RBFA_STACT</name>
<organism>
    <name type="scientific">Staphylococcus carnosus (strain TM300)</name>
    <dbReference type="NCBI Taxonomy" id="396513"/>
    <lineage>
        <taxon>Bacteria</taxon>
        <taxon>Bacillati</taxon>
        <taxon>Bacillota</taxon>
        <taxon>Bacilli</taxon>
        <taxon>Bacillales</taxon>
        <taxon>Staphylococcaceae</taxon>
        <taxon>Staphylococcus</taxon>
    </lineage>
</organism>
<reference key="1">
    <citation type="journal article" date="2009" name="Appl. Environ. Microbiol.">
        <title>Genome analysis of the meat starter culture bacterium Staphylococcus carnosus TM300.</title>
        <authorList>
            <person name="Rosenstein R."/>
            <person name="Nerz C."/>
            <person name="Biswas L."/>
            <person name="Resch A."/>
            <person name="Raddatz G."/>
            <person name="Schuster S.C."/>
            <person name="Goetz F."/>
        </authorList>
    </citation>
    <scope>NUCLEOTIDE SEQUENCE [LARGE SCALE GENOMIC DNA]</scope>
    <source>
        <strain>TM300</strain>
    </source>
</reference>
<comment type="function">
    <text evidence="1">One of several proteins that assist in the late maturation steps of the functional core of the 30S ribosomal subunit. Associates with free 30S ribosomal subunits (but not with 30S subunits that are part of 70S ribosomes or polysomes). Required for efficient processing of 16S rRNA. May interact with the 5'-terminal helix region of 16S rRNA.</text>
</comment>
<comment type="subunit">
    <text evidence="1">Monomer. Binds 30S ribosomal subunits, but not 50S ribosomal subunits or 70S ribosomes.</text>
</comment>
<comment type="subcellular location">
    <subcellularLocation>
        <location evidence="1">Cytoplasm</location>
    </subcellularLocation>
</comment>
<comment type="similarity">
    <text evidence="1">Belongs to the RbfA family.</text>
</comment>